<keyword id="KW-0017">Alkaloid metabolism</keyword>
<keyword id="KW-0349">Heme</keyword>
<keyword id="KW-0408">Iron</keyword>
<keyword id="KW-1017">Isopeptide bond</keyword>
<keyword id="KW-0472">Membrane</keyword>
<keyword id="KW-0479">Metal-binding</keyword>
<keyword id="KW-0503">Monooxygenase</keyword>
<keyword id="KW-0560">Oxidoreductase</keyword>
<keyword id="KW-1185">Reference proteome</keyword>
<keyword id="KW-0812">Transmembrane</keyword>
<keyword id="KW-1133">Transmembrane helix</keyword>
<keyword id="KW-0832">Ubl conjugation</keyword>
<gene>
    <name evidence="7" type="primary">CYP82E3</name>
    <name type="ORF">LOC107820314</name>
</gene>
<sequence length="518" mass="59532">MVFPVEAIVGLVTFTFLFYFLWTKKSQKPSKPLPPKIPGGWPVIGHLFYFDDDGDDRPLARKLGDLADKYGPVFTFRLGLPLVLVVSSYEAIKDCFSTNDAIFSNRPAFLYGEYLGYKNAMLFLANYGSYWRKNRKLIIQEVLSASRLEKFKHVRFARIQTSIKNLYTRIDGNSSTINLTDWLEELNFGLIVKMIAGKNYESGKGDEQVERFKKAFKDFMILSMEFVLWDAFPIPLFKWVDFQGHVKAMKRTFKDIDSVFQNWLEEHIKKREKIMEVGTEGNEQDFIDVVLSKMSNEYLGEGYSRDTVIKATVFSLVLDAADTVALHINCGMALLINNQNALKKAQEEIDTKVGKDRWVEESDIKDLVYLQAIVKEVLRLYPPGPLLVPHENVEDCVVSGYHIPKGTRLFANVMKLQRDPKLWSNPDKFNPERFIARDIDFHGQHYEYIPFGSGRRSCPGMTYALQVEHLTMAHLIQGFNYRTPTDEPLDMKEGAGITIRKVNPVKVIITPRLAPELY</sequence>
<proteinExistence type="evidence at protein level"/>
<comment type="function">
    <text evidence="4 5">No nicotine N-demethylase activity.</text>
</comment>
<comment type="cofactor">
    <cofactor evidence="1">
        <name>heme</name>
        <dbReference type="ChEBI" id="CHEBI:30413"/>
    </cofactor>
</comment>
<comment type="pathway">
    <text evidence="5">Alkaloid biosynthesis; nicotine biosynthesis.</text>
</comment>
<comment type="subcellular location">
    <subcellularLocation>
        <location evidence="3">Membrane</location>
        <topology evidence="3">Single-pass membrane protein</topology>
    </subcellularLocation>
</comment>
<comment type="tissue specificity">
    <text evidence="5">Expressed at low levels in green leaves.</text>
</comment>
<comment type="similarity">
    <text evidence="8">Belongs to the cytochrome P450 family. CYP82E2 subfamily.</text>
</comment>
<name>C82E3_TOBAC</name>
<protein>
    <recommendedName>
        <fullName evidence="6">Cytochrome P450 82E3</fullName>
        <shortName evidence="7">NtabCYP82E3</shortName>
        <ecNumber evidence="5">1.14.14.-</ecNumber>
    </recommendedName>
</protein>
<evidence type="ECO:0000250" key="1">
    <source>
        <dbReference type="UniProtKB" id="P04798"/>
    </source>
</evidence>
<evidence type="ECO:0000250" key="2">
    <source>
        <dbReference type="UniProtKB" id="Q9SZU1"/>
    </source>
</evidence>
<evidence type="ECO:0000255" key="3"/>
<evidence type="ECO:0000269" key="4">
    <source>
    </source>
</evidence>
<evidence type="ECO:0000269" key="5">
    <source>
    </source>
</evidence>
<evidence type="ECO:0000303" key="6">
    <source>
    </source>
</evidence>
<evidence type="ECO:0000303" key="7">
    <source>
    </source>
</evidence>
<evidence type="ECO:0000305" key="8"/>
<reference key="1">
    <citation type="journal article" date="2005" name="Proc. Natl. Acad. Sci. U.S.A.">
        <title>Conversion of nicotine to nornicotine in Nicotiana tabacum is mediated by CYP82E4, a cytochrome P450 monooxygenase.</title>
        <authorList>
            <person name="Siminszky B."/>
            <person name="Gavilano L."/>
            <person name="Bowen S.W."/>
            <person name="Dewey R.E."/>
        </authorList>
    </citation>
    <scope>NUCLEOTIDE SEQUENCE [MRNA]</scope>
    <scope>FUNCTION</scope>
    <source>
        <strain>cv. Burley</strain>
    </source>
</reference>
<reference key="2">
    <citation type="journal article" date="2014" name="Nat. Commun.">
        <title>The tobacco genome sequence and its comparison with those of tomato and potato.</title>
        <authorList>
            <person name="Sierro N."/>
            <person name="Battey J.N."/>
            <person name="Ouadi S."/>
            <person name="Bakaher N."/>
            <person name="Bovet L."/>
            <person name="Willig A."/>
            <person name="Goepfert S."/>
            <person name="Peitsch M.C."/>
            <person name="Ivanov N.V."/>
        </authorList>
    </citation>
    <scope>NUCLEOTIDE SEQUENCE [LARGE SCALE GENOMIC DNA]</scope>
    <source>
        <strain>cv. TN90</strain>
    </source>
</reference>
<reference key="3">
    <citation type="journal article" date="2007" name="J. Biol. Chem.">
        <title>Functional analysis of nicotine demethylase genes reveals insights into the evolution of modern tobacco.</title>
        <authorList>
            <person name="Gavilano L.B."/>
            <person name="Coleman N.P."/>
            <person name="Bowen S.W."/>
            <person name="Siminszky B."/>
        </authorList>
    </citation>
    <scope>FUNCTION</scope>
    <scope>MUTAGENESIS OF CYS-330</scope>
    <scope>PATHWAY</scope>
    <scope>TISSUE SPECIFICITY</scope>
</reference>
<organism>
    <name type="scientific">Nicotiana tabacum</name>
    <name type="common">Common tobacco</name>
    <dbReference type="NCBI Taxonomy" id="4097"/>
    <lineage>
        <taxon>Eukaryota</taxon>
        <taxon>Viridiplantae</taxon>
        <taxon>Streptophyta</taxon>
        <taxon>Embryophyta</taxon>
        <taxon>Tracheophyta</taxon>
        <taxon>Spermatophyta</taxon>
        <taxon>Magnoliopsida</taxon>
        <taxon>eudicotyledons</taxon>
        <taxon>Gunneridae</taxon>
        <taxon>Pentapetalae</taxon>
        <taxon>asterids</taxon>
        <taxon>lamiids</taxon>
        <taxon>Solanales</taxon>
        <taxon>Solanaceae</taxon>
        <taxon>Nicotianoideae</taxon>
        <taxon>Nicotianeae</taxon>
        <taxon>Nicotiana</taxon>
    </lineage>
</organism>
<feature type="chain" id="PRO_0000455783" description="Cytochrome P450 82E3">
    <location>
        <begin position="1"/>
        <end position="518"/>
    </location>
</feature>
<feature type="transmembrane region" description="Helical" evidence="3">
    <location>
        <begin position="2"/>
        <end position="22"/>
    </location>
</feature>
<feature type="binding site" description="axial binding residue" evidence="1">
    <location>
        <position position="458"/>
    </location>
    <ligand>
        <name>heme</name>
        <dbReference type="ChEBI" id="CHEBI:30413"/>
    </ligand>
    <ligandPart>
        <name>Fe</name>
        <dbReference type="ChEBI" id="CHEBI:18248"/>
    </ligandPart>
</feature>
<feature type="cross-link" description="Glycyl lysine isopeptide (Lys-Gly) (interchain with G-Cter in ubiquitin)" evidence="2">
    <location>
        <position position="254"/>
    </location>
</feature>
<feature type="mutagenesis site" description="Confers nicotine N-demethylase (NND) activity." evidence="5">
    <original>C</original>
    <variation>W</variation>
    <location>
        <position position="330"/>
    </location>
</feature>
<dbReference type="EC" id="1.14.14.-" evidence="5"/>
<dbReference type="EMBL" id="DQ131888">
    <property type="protein sequence ID" value="ABA07807.1"/>
    <property type="molecule type" value="mRNA"/>
</dbReference>
<dbReference type="RefSeq" id="NP_001312992.1">
    <property type="nucleotide sequence ID" value="NM_001326063.1"/>
</dbReference>
<dbReference type="SMR" id="Q38Q84"/>
<dbReference type="STRING" id="4097.Q38Q84"/>
<dbReference type="PaxDb" id="4097-Q38Q84"/>
<dbReference type="GeneID" id="107820314"/>
<dbReference type="KEGG" id="nta:107820314"/>
<dbReference type="OMA" id="HINCGMA"/>
<dbReference type="OrthoDB" id="1055148at2759"/>
<dbReference type="BRENDA" id="1.14.14.1">
    <property type="organism ID" value="3645"/>
</dbReference>
<dbReference type="UniPathway" id="UPA00107"/>
<dbReference type="Proteomes" id="UP000084051">
    <property type="component" value="Unplaced"/>
</dbReference>
<dbReference type="GO" id="GO:0016020">
    <property type="term" value="C:membrane"/>
    <property type="evidence" value="ECO:0007669"/>
    <property type="project" value="UniProtKB-SubCell"/>
</dbReference>
<dbReference type="GO" id="GO:0020037">
    <property type="term" value="F:heme binding"/>
    <property type="evidence" value="ECO:0007669"/>
    <property type="project" value="InterPro"/>
</dbReference>
<dbReference type="GO" id="GO:0005506">
    <property type="term" value="F:iron ion binding"/>
    <property type="evidence" value="ECO:0007669"/>
    <property type="project" value="InterPro"/>
</dbReference>
<dbReference type="GO" id="GO:0004497">
    <property type="term" value="F:monooxygenase activity"/>
    <property type="evidence" value="ECO:0000318"/>
    <property type="project" value="GO_Central"/>
</dbReference>
<dbReference type="GO" id="GO:0016705">
    <property type="term" value="F:oxidoreductase activity, acting on paired donors, with incorporation or reduction of molecular oxygen"/>
    <property type="evidence" value="ECO:0007669"/>
    <property type="project" value="InterPro"/>
</dbReference>
<dbReference type="GO" id="GO:0009820">
    <property type="term" value="P:alkaloid metabolic process"/>
    <property type="evidence" value="ECO:0007669"/>
    <property type="project" value="UniProtKB-KW"/>
</dbReference>
<dbReference type="GO" id="GO:0042179">
    <property type="term" value="P:nicotine biosynthetic process"/>
    <property type="evidence" value="ECO:0007669"/>
    <property type="project" value="UniProtKB-UniPathway"/>
</dbReference>
<dbReference type="FunFam" id="1.10.630.10:FF:000026">
    <property type="entry name" value="Cytochrome P450 82C4"/>
    <property type="match status" value="1"/>
</dbReference>
<dbReference type="Gene3D" id="1.10.630.10">
    <property type="entry name" value="Cytochrome P450"/>
    <property type="match status" value="1"/>
</dbReference>
<dbReference type="InterPro" id="IPR001128">
    <property type="entry name" value="Cyt_P450"/>
</dbReference>
<dbReference type="InterPro" id="IPR017972">
    <property type="entry name" value="Cyt_P450_CS"/>
</dbReference>
<dbReference type="InterPro" id="IPR002401">
    <property type="entry name" value="Cyt_P450_E_grp-I"/>
</dbReference>
<dbReference type="InterPro" id="IPR036396">
    <property type="entry name" value="Cyt_P450_sf"/>
</dbReference>
<dbReference type="InterPro" id="IPR050651">
    <property type="entry name" value="Plant_Cytochrome_P450_Monoox"/>
</dbReference>
<dbReference type="PANTHER" id="PTHR47947">
    <property type="entry name" value="CYTOCHROME P450 82C3-RELATED"/>
    <property type="match status" value="1"/>
</dbReference>
<dbReference type="PANTHER" id="PTHR47947:SF1">
    <property type="entry name" value="CYTOCHROME P450 82E3"/>
    <property type="match status" value="1"/>
</dbReference>
<dbReference type="Pfam" id="PF00067">
    <property type="entry name" value="p450"/>
    <property type="match status" value="1"/>
</dbReference>
<dbReference type="PRINTS" id="PR00463">
    <property type="entry name" value="EP450I"/>
</dbReference>
<dbReference type="PRINTS" id="PR00385">
    <property type="entry name" value="P450"/>
</dbReference>
<dbReference type="SUPFAM" id="SSF48264">
    <property type="entry name" value="Cytochrome P450"/>
    <property type="match status" value="1"/>
</dbReference>
<dbReference type="PROSITE" id="PS00086">
    <property type="entry name" value="CYTOCHROME_P450"/>
    <property type="match status" value="1"/>
</dbReference>
<accession>Q38Q84</accession>